<protein>
    <recommendedName>
        <fullName evidence="1">GTPase Era</fullName>
    </recommendedName>
</protein>
<evidence type="ECO:0000255" key="1">
    <source>
        <dbReference type="HAMAP-Rule" id="MF_00367"/>
    </source>
</evidence>
<evidence type="ECO:0000255" key="2">
    <source>
        <dbReference type="PROSITE-ProRule" id="PRU01050"/>
    </source>
</evidence>
<proteinExistence type="inferred from homology"/>
<organism>
    <name type="scientific">Staphylococcus aureus (strain MSSA476)</name>
    <dbReference type="NCBI Taxonomy" id="282459"/>
    <lineage>
        <taxon>Bacteria</taxon>
        <taxon>Bacillati</taxon>
        <taxon>Bacillota</taxon>
        <taxon>Bacilli</taxon>
        <taxon>Bacillales</taxon>
        <taxon>Staphylococcaceae</taxon>
        <taxon>Staphylococcus</taxon>
    </lineage>
</organism>
<sequence length="299" mass="34329">MTEHKSGFVSIIGRPNVGKSTFVNRVIGHKIAIMSDKAQTTRNKIQGVMTRDDAQIIFIDTPGIHKPKHKLGDYMMKVAKNTLSEIDAIMFMVNANEEIGRGDEYIIEMLKNVKTPVFLVLNKIDLVHPDELMPKIEEYQSYMDFTEIVPISALEGLNVDHFIDVLKTYLPEGPKYYPDDQISDHPEQFVVGEIIREKILHLTSEEIPHAIGVNVDRMVKESEDRVHIEATIYVERDSQKGIVIGKGGKKLKEVGKRARRDIEMLLGSKVYLELWVKVQRDWRNKVNFIRQIGYVEDQD</sequence>
<dbReference type="EMBL" id="BX571857">
    <property type="protein sequence ID" value="CAG43306.1"/>
    <property type="molecule type" value="Genomic_DNA"/>
</dbReference>
<dbReference type="RefSeq" id="WP_000134765.1">
    <property type="nucleotide sequence ID" value="NC_002953.3"/>
</dbReference>
<dbReference type="SMR" id="Q6G900"/>
<dbReference type="KEGG" id="sas:SAS1505"/>
<dbReference type="HOGENOM" id="CLU_038009_1_0_9"/>
<dbReference type="GO" id="GO:0005829">
    <property type="term" value="C:cytosol"/>
    <property type="evidence" value="ECO:0007669"/>
    <property type="project" value="TreeGrafter"/>
</dbReference>
<dbReference type="GO" id="GO:0005886">
    <property type="term" value="C:plasma membrane"/>
    <property type="evidence" value="ECO:0007669"/>
    <property type="project" value="UniProtKB-SubCell"/>
</dbReference>
<dbReference type="GO" id="GO:0005525">
    <property type="term" value="F:GTP binding"/>
    <property type="evidence" value="ECO:0007669"/>
    <property type="project" value="UniProtKB-UniRule"/>
</dbReference>
<dbReference type="GO" id="GO:0003924">
    <property type="term" value="F:GTPase activity"/>
    <property type="evidence" value="ECO:0007669"/>
    <property type="project" value="UniProtKB-UniRule"/>
</dbReference>
<dbReference type="GO" id="GO:0043024">
    <property type="term" value="F:ribosomal small subunit binding"/>
    <property type="evidence" value="ECO:0007669"/>
    <property type="project" value="TreeGrafter"/>
</dbReference>
<dbReference type="GO" id="GO:0070181">
    <property type="term" value="F:small ribosomal subunit rRNA binding"/>
    <property type="evidence" value="ECO:0007669"/>
    <property type="project" value="UniProtKB-UniRule"/>
</dbReference>
<dbReference type="GO" id="GO:0000028">
    <property type="term" value="P:ribosomal small subunit assembly"/>
    <property type="evidence" value="ECO:0007669"/>
    <property type="project" value="TreeGrafter"/>
</dbReference>
<dbReference type="CDD" id="cd04163">
    <property type="entry name" value="Era"/>
    <property type="match status" value="1"/>
</dbReference>
<dbReference type="CDD" id="cd22534">
    <property type="entry name" value="KH-II_Era"/>
    <property type="match status" value="1"/>
</dbReference>
<dbReference type="FunFam" id="3.30.300.20:FF:000003">
    <property type="entry name" value="GTPase Era"/>
    <property type="match status" value="1"/>
</dbReference>
<dbReference type="FunFam" id="3.40.50.300:FF:000094">
    <property type="entry name" value="GTPase Era"/>
    <property type="match status" value="1"/>
</dbReference>
<dbReference type="Gene3D" id="3.30.300.20">
    <property type="match status" value="1"/>
</dbReference>
<dbReference type="Gene3D" id="3.40.50.300">
    <property type="entry name" value="P-loop containing nucleotide triphosphate hydrolases"/>
    <property type="match status" value="1"/>
</dbReference>
<dbReference type="HAMAP" id="MF_00367">
    <property type="entry name" value="GTPase_Era"/>
    <property type="match status" value="1"/>
</dbReference>
<dbReference type="InterPro" id="IPR030388">
    <property type="entry name" value="G_ERA_dom"/>
</dbReference>
<dbReference type="InterPro" id="IPR006073">
    <property type="entry name" value="GTP-bd"/>
</dbReference>
<dbReference type="InterPro" id="IPR005662">
    <property type="entry name" value="GTPase_Era-like"/>
</dbReference>
<dbReference type="InterPro" id="IPR015946">
    <property type="entry name" value="KH_dom-like_a/b"/>
</dbReference>
<dbReference type="InterPro" id="IPR004044">
    <property type="entry name" value="KH_dom_type_2"/>
</dbReference>
<dbReference type="InterPro" id="IPR009019">
    <property type="entry name" value="KH_sf_prok-type"/>
</dbReference>
<dbReference type="InterPro" id="IPR027417">
    <property type="entry name" value="P-loop_NTPase"/>
</dbReference>
<dbReference type="InterPro" id="IPR005225">
    <property type="entry name" value="Small_GTP-bd"/>
</dbReference>
<dbReference type="NCBIfam" id="TIGR00436">
    <property type="entry name" value="era"/>
    <property type="match status" value="1"/>
</dbReference>
<dbReference type="NCBIfam" id="NF000908">
    <property type="entry name" value="PRK00089.1"/>
    <property type="match status" value="1"/>
</dbReference>
<dbReference type="NCBIfam" id="TIGR00231">
    <property type="entry name" value="small_GTP"/>
    <property type="match status" value="1"/>
</dbReference>
<dbReference type="PANTHER" id="PTHR42698">
    <property type="entry name" value="GTPASE ERA"/>
    <property type="match status" value="1"/>
</dbReference>
<dbReference type="PANTHER" id="PTHR42698:SF1">
    <property type="entry name" value="GTPASE ERA, MITOCHONDRIAL"/>
    <property type="match status" value="1"/>
</dbReference>
<dbReference type="Pfam" id="PF07650">
    <property type="entry name" value="KH_2"/>
    <property type="match status" value="1"/>
</dbReference>
<dbReference type="Pfam" id="PF01926">
    <property type="entry name" value="MMR_HSR1"/>
    <property type="match status" value="1"/>
</dbReference>
<dbReference type="SUPFAM" id="SSF52540">
    <property type="entry name" value="P-loop containing nucleoside triphosphate hydrolases"/>
    <property type="match status" value="1"/>
</dbReference>
<dbReference type="SUPFAM" id="SSF54814">
    <property type="entry name" value="Prokaryotic type KH domain (KH-domain type II)"/>
    <property type="match status" value="1"/>
</dbReference>
<dbReference type="PROSITE" id="PS51713">
    <property type="entry name" value="G_ERA"/>
    <property type="match status" value="1"/>
</dbReference>
<dbReference type="PROSITE" id="PS50823">
    <property type="entry name" value="KH_TYPE_2"/>
    <property type="match status" value="1"/>
</dbReference>
<comment type="function">
    <text evidence="1">An essential GTPase that binds both GDP and GTP, with rapid nucleotide exchange. Plays a role in 16S rRNA processing and 30S ribosomal subunit biogenesis and possibly also in cell cycle regulation and energy metabolism.</text>
</comment>
<comment type="subunit">
    <text evidence="1">Monomer.</text>
</comment>
<comment type="subcellular location">
    <subcellularLocation>
        <location>Cytoplasm</location>
    </subcellularLocation>
    <subcellularLocation>
        <location evidence="1">Cell membrane</location>
        <topology evidence="1">Peripheral membrane protein</topology>
    </subcellularLocation>
</comment>
<comment type="similarity">
    <text evidence="1 2">Belongs to the TRAFAC class TrmE-Era-EngA-EngB-Septin-like GTPase superfamily. Era GTPase family.</text>
</comment>
<name>ERA_STAAS</name>
<keyword id="KW-1003">Cell membrane</keyword>
<keyword id="KW-0963">Cytoplasm</keyword>
<keyword id="KW-0342">GTP-binding</keyword>
<keyword id="KW-0472">Membrane</keyword>
<keyword id="KW-0547">Nucleotide-binding</keyword>
<keyword id="KW-0690">Ribosome biogenesis</keyword>
<keyword id="KW-0694">RNA-binding</keyword>
<keyword id="KW-0699">rRNA-binding</keyword>
<reference key="1">
    <citation type="journal article" date="2004" name="Proc. Natl. Acad. Sci. U.S.A.">
        <title>Complete genomes of two clinical Staphylococcus aureus strains: evidence for the rapid evolution of virulence and drug resistance.</title>
        <authorList>
            <person name="Holden M.T.G."/>
            <person name="Feil E.J."/>
            <person name="Lindsay J.A."/>
            <person name="Peacock S.J."/>
            <person name="Day N.P.J."/>
            <person name="Enright M.C."/>
            <person name="Foster T.J."/>
            <person name="Moore C.E."/>
            <person name="Hurst L."/>
            <person name="Atkin R."/>
            <person name="Barron A."/>
            <person name="Bason N."/>
            <person name="Bentley S.D."/>
            <person name="Chillingworth C."/>
            <person name="Chillingworth T."/>
            <person name="Churcher C."/>
            <person name="Clark L."/>
            <person name="Corton C."/>
            <person name="Cronin A."/>
            <person name="Doggett J."/>
            <person name="Dowd L."/>
            <person name="Feltwell T."/>
            <person name="Hance Z."/>
            <person name="Harris B."/>
            <person name="Hauser H."/>
            <person name="Holroyd S."/>
            <person name="Jagels K."/>
            <person name="James K.D."/>
            <person name="Lennard N."/>
            <person name="Line A."/>
            <person name="Mayes R."/>
            <person name="Moule S."/>
            <person name="Mungall K."/>
            <person name="Ormond D."/>
            <person name="Quail M.A."/>
            <person name="Rabbinowitsch E."/>
            <person name="Rutherford K.M."/>
            <person name="Sanders M."/>
            <person name="Sharp S."/>
            <person name="Simmonds M."/>
            <person name="Stevens K."/>
            <person name="Whitehead S."/>
            <person name="Barrell B.G."/>
            <person name="Spratt B.G."/>
            <person name="Parkhill J."/>
        </authorList>
    </citation>
    <scope>NUCLEOTIDE SEQUENCE [LARGE SCALE GENOMIC DNA]</scope>
    <source>
        <strain>MSSA476</strain>
    </source>
</reference>
<feature type="chain" id="PRO_0000180050" description="GTPase Era">
    <location>
        <begin position="1"/>
        <end position="299"/>
    </location>
</feature>
<feature type="domain" description="Era-type G" evidence="2">
    <location>
        <begin position="5"/>
        <end position="172"/>
    </location>
</feature>
<feature type="domain" description="KH type-2" evidence="1">
    <location>
        <begin position="203"/>
        <end position="280"/>
    </location>
</feature>
<feature type="region of interest" description="G1" evidence="2">
    <location>
        <begin position="13"/>
        <end position="20"/>
    </location>
</feature>
<feature type="region of interest" description="G2" evidence="2">
    <location>
        <begin position="39"/>
        <end position="43"/>
    </location>
</feature>
<feature type="region of interest" description="G3" evidence="2">
    <location>
        <begin position="60"/>
        <end position="63"/>
    </location>
</feature>
<feature type="region of interest" description="G4" evidence="2">
    <location>
        <begin position="122"/>
        <end position="125"/>
    </location>
</feature>
<feature type="region of interest" description="G5" evidence="2">
    <location>
        <begin position="151"/>
        <end position="153"/>
    </location>
</feature>
<feature type="binding site" evidence="1">
    <location>
        <begin position="13"/>
        <end position="20"/>
    </location>
    <ligand>
        <name>GTP</name>
        <dbReference type="ChEBI" id="CHEBI:37565"/>
    </ligand>
</feature>
<feature type="binding site" evidence="1">
    <location>
        <begin position="60"/>
        <end position="64"/>
    </location>
    <ligand>
        <name>GTP</name>
        <dbReference type="ChEBI" id="CHEBI:37565"/>
    </ligand>
</feature>
<feature type="binding site" evidence="1">
    <location>
        <begin position="122"/>
        <end position="125"/>
    </location>
    <ligand>
        <name>GTP</name>
        <dbReference type="ChEBI" id="CHEBI:37565"/>
    </ligand>
</feature>
<accession>Q6G900</accession>
<gene>
    <name evidence="1" type="primary">era</name>
    <name type="ordered locus">SAS1505</name>
</gene>